<dbReference type="EMBL" id="AB193547">
    <property type="protein sequence ID" value="BAD94444.1"/>
    <property type="molecule type" value="mRNA"/>
</dbReference>
<dbReference type="RefSeq" id="NP_001027897.1">
    <property type="nucleotide sequence ID" value="NM_001032725.1"/>
</dbReference>
<dbReference type="SMR" id="Q588G0"/>
<dbReference type="STRING" id="31033.ENSTRUP00000034085"/>
<dbReference type="Ensembl" id="ENSTRUT00000034211.3">
    <property type="protein sequence ID" value="ENSTRUP00000034085.1"/>
    <property type="gene ID" value="ENSTRUG00000022248.2"/>
</dbReference>
<dbReference type="GeneID" id="548631"/>
<dbReference type="KEGG" id="tru:548631"/>
<dbReference type="CTD" id="3952"/>
<dbReference type="GeneTree" id="ENSGT00530000066614"/>
<dbReference type="HOGENOM" id="CLU_1643161_0_0_1"/>
<dbReference type="InParanoid" id="Q588G0"/>
<dbReference type="OMA" id="RQGHCSE"/>
<dbReference type="OrthoDB" id="8444189at2759"/>
<dbReference type="Proteomes" id="UP000005226">
    <property type="component" value="Chromosome 9"/>
</dbReference>
<dbReference type="GO" id="GO:0005576">
    <property type="term" value="C:extracellular region"/>
    <property type="evidence" value="ECO:0007669"/>
    <property type="project" value="UniProtKB-SubCell"/>
</dbReference>
<dbReference type="Gene3D" id="1.20.1250.10">
    <property type="match status" value="1"/>
</dbReference>
<dbReference type="InterPro" id="IPR009079">
    <property type="entry name" value="4_helix_cytokine-like_core"/>
</dbReference>
<feature type="signal peptide" evidence="2">
    <location>
        <begin position="1"/>
        <end position="26"/>
    </location>
</feature>
<feature type="chain" id="PRO_0000042928" description="Leptin">
    <location>
        <begin position="27"/>
        <end position="152"/>
    </location>
</feature>
<feature type="disulfide bond" evidence="1">
    <location>
        <begin position="109"/>
        <end position="152"/>
    </location>
</feature>
<organism>
    <name type="scientific">Takifugu rubripes</name>
    <name type="common">Japanese pufferfish</name>
    <name type="synonym">Fugu rubripes</name>
    <dbReference type="NCBI Taxonomy" id="31033"/>
    <lineage>
        <taxon>Eukaryota</taxon>
        <taxon>Metazoa</taxon>
        <taxon>Chordata</taxon>
        <taxon>Craniata</taxon>
        <taxon>Vertebrata</taxon>
        <taxon>Euteleostomi</taxon>
        <taxon>Actinopterygii</taxon>
        <taxon>Neopterygii</taxon>
        <taxon>Teleostei</taxon>
        <taxon>Neoteleostei</taxon>
        <taxon>Acanthomorphata</taxon>
        <taxon>Eupercaria</taxon>
        <taxon>Tetraodontiformes</taxon>
        <taxon>Tetradontoidea</taxon>
        <taxon>Tetraodontidae</taxon>
        <taxon>Takifugu</taxon>
    </lineage>
</organism>
<evidence type="ECO:0000250" key="1"/>
<evidence type="ECO:0000255" key="2"/>
<evidence type="ECO:0000269" key="3">
    <source>
    </source>
</evidence>
<evidence type="ECO:0000305" key="4"/>
<proteinExistence type="evidence at transcript level"/>
<reference key="1">
    <citation type="journal article" date="2005" name="Peptides">
        <title>Identification of cDNA coding for a homologue to mammalian leptin from pufferfish, Takifugu rubripes.</title>
        <authorList>
            <person name="Kurokawa T."/>
            <person name="Uji S."/>
            <person name="Suzuki T."/>
        </authorList>
    </citation>
    <scope>NUCLEOTIDE SEQUENCE [MRNA]</scope>
    <scope>TISSUE SPECIFICITY</scope>
    <source>
        <tissue>Liver</tissue>
    </source>
</reference>
<accession>Q588G0</accession>
<keyword id="KW-1015">Disulfide bond</keyword>
<keyword id="KW-0550">Obesity</keyword>
<keyword id="KW-1185">Reference proteome</keyword>
<keyword id="KW-0964">Secreted</keyword>
<keyword id="KW-0732">Signal</keyword>
<name>LEP_TAKRU</name>
<gene>
    <name type="primary">lep</name>
</gene>
<sequence>MDHILALVLALLPLSLCVALPGALDAMDVEKMKSKVTWKAQGLVARIDKHFPDRGLRFDTDKVEGSTSVVASLESYNNLISDRFGGVSQIKTEISSLAGYLNHWREGNCQEQQPKVWPRRNIFNHTVSLEALMRVREFLKLLQKNVDLLERC</sequence>
<comment type="function">
    <text evidence="1">May function as part of a signaling pathway that acts to regulate the size of the body fat depot.</text>
</comment>
<comment type="subcellular location">
    <subcellularLocation>
        <location evidence="4">Secreted</location>
    </subcellularLocation>
</comment>
<comment type="tissue specificity">
    <text evidence="3">Expressed mostly in the liver.</text>
</comment>
<comment type="similarity">
    <text evidence="4">Belongs to the leptin family.</text>
</comment>
<protein>
    <recommendedName>
        <fullName>Leptin</fullName>
    </recommendedName>
</protein>